<name>RL27_BRUO2</name>
<feature type="chain" id="PRO_1000017424" description="Large ribosomal subunit protein bL27">
    <location>
        <begin position="1"/>
        <end position="89"/>
    </location>
</feature>
<feature type="region of interest" description="Disordered" evidence="2">
    <location>
        <begin position="1"/>
        <end position="22"/>
    </location>
</feature>
<gene>
    <name evidence="1" type="primary">rpmA</name>
    <name type="ordered locus">BOV_1781</name>
</gene>
<keyword id="KW-0687">Ribonucleoprotein</keyword>
<keyword id="KW-0689">Ribosomal protein</keyword>
<reference key="1">
    <citation type="journal article" date="2009" name="PLoS ONE">
        <title>Genome degradation in Brucella ovis corresponds with narrowing of its host range and tissue tropism.</title>
        <authorList>
            <person name="Tsolis R.M."/>
            <person name="Seshadri R."/>
            <person name="Santos R.L."/>
            <person name="Sangari F.J."/>
            <person name="Lobo J.M."/>
            <person name="de Jong M.F."/>
            <person name="Ren Q."/>
            <person name="Myers G."/>
            <person name="Brinkac L.M."/>
            <person name="Nelson W.C."/>
            <person name="Deboy R.T."/>
            <person name="Angiuoli S."/>
            <person name="Khouri H."/>
            <person name="Dimitrov G."/>
            <person name="Robinson J.R."/>
            <person name="Mulligan S."/>
            <person name="Walker R.L."/>
            <person name="Elzer P.E."/>
            <person name="Hassan K.A."/>
            <person name="Paulsen I.T."/>
        </authorList>
    </citation>
    <scope>NUCLEOTIDE SEQUENCE [LARGE SCALE GENOMIC DNA]</scope>
    <source>
        <strain>ATCC 25840 / 63/290 / NCTC 10512</strain>
    </source>
</reference>
<comment type="similarity">
    <text evidence="1">Belongs to the bacterial ribosomal protein bL27 family.</text>
</comment>
<organism>
    <name type="scientific">Brucella ovis (strain ATCC 25840 / 63/290 / NCTC 10512)</name>
    <dbReference type="NCBI Taxonomy" id="444178"/>
    <lineage>
        <taxon>Bacteria</taxon>
        <taxon>Pseudomonadati</taxon>
        <taxon>Pseudomonadota</taxon>
        <taxon>Alphaproteobacteria</taxon>
        <taxon>Hyphomicrobiales</taxon>
        <taxon>Brucellaceae</taxon>
        <taxon>Brucella/Ochrobactrum group</taxon>
        <taxon>Brucella</taxon>
    </lineage>
</organism>
<evidence type="ECO:0000255" key="1">
    <source>
        <dbReference type="HAMAP-Rule" id="MF_00539"/>
    </source>
</evidence>
<evidence type="ECO:0000256" key="2">
    <source>
        <dbReference type="SAM" id="MobiDB-lite"/>
    </source>
</evidence>
<evidence type="ECO:0000305" key="3"/>
<proteinExistence type="inferred from homology"/>
<accession>A5VSI8</accession>
<sequence length="89" mass="9377">MAHKKAGGSSRNGRDSESKRLGVKKFGGEAVLAGNIIVRQRGTKWHPGANVGLGKDHTIFATVNGSVSFRTKANGRTYVSVNPIAEAAE</sequence>
<protein>
    <recommendedName>
        <fullName evidence="1">Large ribosomal subunit protein bL27</fullName>
    </recommendedName>
    <alternativeName>
        <fullName evidence="3">50S ribosomal protein L27</fullName>
    </alternativeName>
</protein>
<dbReference type="EMBL" id="CP000708">
    <property type="protein sequence ID" value="ABQ60913.1"/>
    <property type="molecule type" value="Genomic_DNA"/>
</dbReference>
<dbReference type="RefSeq" id="WP_002964927.1">
    <property type="nucleotide sequence ID" value="NC_009505.1"/>
</dbReference>
<dbReference type="SMR" id="A5VSI8"/>
<dbReference type="GeneID" id="93017814"/>
<dbReference type="KEGG" id="bov:BOV_1781"/>
<dbReference type="HOGENOM" id="CLU_095424_4_1_5"/>
<dbReference type="Proteomes" id="UP000006383">
    <property type="component" value="Chromosome I"/>
</dbReference>
<dbReference type="GO" id="GO:0022625">
    <property type="term" value="C:cytosolic large ribosomal subunit"/>
    <property type="evidence" value="ECO:0007669"/>
    <property type="project" value="TreeGrafter"/>
</dbReference>
<dbReference type="GO" id="GO:0003735">
    <property type="term" value="F:structural constituent of ribosome"/>
    <property type="evidence" value="ECO:0007669"/>
    <property type="project" value="InterPro"/>
</dbReference>
<dbReference type="GO" id="GO:0006412">
    <property type="term" value="P:translation"/>
    <property type="evidence" value="ECO:0007669"/>
    <property type="project" value="UniProtKB-UniRule"/>
</dbReference>
<dbReference type="FunFam" id="2.40.50.100:FF:000020">
    <property type="entry name" value="50S ribosomal protein L27"/>
    <property type="match status" value="1"/>
</dbReference>
<dbReference type="Gene3D" id="2.40.50.100">
    <property type="match status" value="1"/>
</dbReference>
<dbReference type="HAMAP" id="MF_00539">
    <property type="entry name" value="Ribosomal_bL27"/>
    <property type="match status" value="1"/>
</dbReference>
<dbReference type="InterPro" id="IPR001684">
    <property type="entry name" value="Ribosomal_bL27"/>
</dbReference>
<dbReference type="InterPro" id="IPR018261">
    <property type="entry name" value="Ribosomal_bL27_CS"/>
</dbReference>
<dbReference type="NCBIfam" id="TIGR00062">
    <property type="entry name" value="L27"/>
    <property type="match status" value="1"/>
</dbReference>
<dbReference type="PANTHER" id="PTHR15893:SF0">
    <property type="entry name" value="LARGE RIBOSOMAL SUBUNIT PROTEIN BL27M"/>
    <property type="match status" value="1"/>
</dbReference>
<dbReference type="PANTHER" id="PTHR15893">
    <property type="entry name" value="RIBOSOMAL PROTEIN L27"/>
    <property type="match status" value="1"/>
</dbReference>
<dbReference type="Pfam" id="PF01016">
    <property type="entry name" value="Ribosomal_L27"/>
    <property type="match status" value="1"/>
</dbReference>
<dbReference type="PRINTS" id="PR00063">
    <property type="entry name" value="RIBOSOMALL27"/>
</dbReference>
<dbReference type="SUPFAM" id="SSF110324">
    <property type="entry name" value="Ribosomal L27 protein-like"/>
    <property type="match status" value="1"/>
</dbReference>
<dbReference type="PROSITE" id="PS00831">
    <property type="entry name" value="RIBOSOMAL_L27"/>
    <property type="match status" value="1"/>
</dbReference>